<reference key="1">
    <citation type="journal article" date="1998" name="Nature">
        <title>Analysis of 1.9 Mb of contiguous sequence from chromosome 4 of Arabidopsis thaliana.</title>
        <authorList>
            <person name="Bevan M."/>
            <person name="Bancroft I."/>
            <person name="Bent E."/>
            <person name="Love K."/>
            <person name="Goodman H.M."/>
            <person name="Dean C."/>
            <person name="Bergkamp R."/>
            <person name="Dirkse W."/>
            <person name="van Staveren M."/>
            <person name="Stiekema W."/>
            <person name="Drost L."/>
            <person name="Ridley P."/>
            <person name="Hudson S.-A."/>
            <person name="Patel K."/>
            <person name="Murphy G."/>
            <person name="Piffanelli P."/>
            <person name="Wedler H."/>
            <person name="Wedler E."/>
            <person name="Wambutt R."/>
            <person name="Weitzenegger T."/>
            <person name="Pohl T."/>
            <person name="Terryn N."/>
            <person name="Gielen J."/>
            <person name="Villarroel R."/>
            <person name="De Clercq R."/>
            <person name="van Montagu M."/>
            <person name="Lecharny A."/>
            <person name="Aubourg S."/>
            <person name="Gy I."/>
            <person name="Kreis M."/>
            <person name="Lao N."/>
            <person name="Kavanagh T."/>
            <person name="Hempel S."/>
            <person name="Kotter P."/>
            <person name="Entian K.-D."/>
            <person name="Rieger M."/>
            <person name="Schaefer M."/>
            <person name="Funk B."/>
            <person name="Mueller-Auer S."/>
            <person name="Silvey M."/>
            <person name="James R."/>
            <person name="Monfort A."/>
            <person name="Pons A."/>
            <person name="Puigdomenech P."/>
            <person name="Douka A."/>
            <person name="Voukelatou E."/>
            <person name="Milioni D."/>
            <person name="Hatzopoulos P."/>
            <person name="Piravandi E."/>
            <person name="Obermaier B."/>
            <person name="Hilbert H."/>
            <person name="Duesterhoeft A."/>
            <person name="Moores T."/>
            <person name="Jones J.D.G."/>
            <person name="Eneva T."/>
            <person name="Palme K."/>
            <person name="Benes V."/>
            <person name="Rechmann S."/>
            <person name="Ansorge W."/>
            <person name="Cooke R."/>
            <person name="Berger C."/>
            <person name="Delseny M."/>
            <person name="Voet M."/>
            <person name="Volckaert G."/>
            <person name="Mewes H.-W."/>
            <person name="Klosterman S."/>
            <person name="Schueller C."/>
            <person name="Chalwatzis N."/>
        </authorList>
    </citation>
    <scope>NUCLEOTIDE SEQUENCE [LARGE SCALE GENOMIC DNA]</scope>
    <source>
        <strain>cv. Columbia</strain>
    </source>
</reference>
<reference key="2">
    <citation type="journal article" date="1999" name="Nature">
        <title>Sequence and analysis of chromosome 4 of the plant Arabidopsis thaliana.</title>
        <authorList>
            <person name="Mayer K.F.X."/>
            <person name="Schueller C."/>
            <person name="Wambutt R."/>
            <person name="Murphy G."/>
            <person name="Volckaert G."/>
            <person name="Pohl T."/>
            <person name="Duesterhoeft A."/>
            <person name="Stiekema W."/>
            <person name="Entian K.-D."/>
            <person name="Terryn N."/>
            <person name="Harris B."/>
            <person name="Ansorge W."/>
            <person name="Brandt P."/>
            <person name="Grivell L.A."/>
            <person name="Rieger M."/>
            <person name="Weichselgartner M."/>
            <person name="de Simone V."/>
            <person name="Obermaier B."/>
            <person name="Mache R."/>
            <person name="Mueller M."/>
            <person name="Kreis M."/>
            <person name="Delseny M."/>
            <person name="Puigdomenech P."/>
            <person name="Watson M."/>
            <person name="Schmidtheini T."/>
            <person name="Reichert B."/>
            <person name="Portetelle D."/>
            <person name="Perez-Alonso M."/>
            <person name="Boutry M."/>
            <person name="Bancroft I."/>
            <person name="Vos P."/>
            <person name="Hoheisel J."/>
            <person name="Zimmermann W."/>
            <person name="Wedler H."/>
            <person name="Ridley P."/>
            <person name="Langham S.-A."/>
            <person name="McCullagh B."/>
            <person name="Bilham L."/>
            <person name="Robben J."/>
            <person name="van der Schueren J."/>
            <person name="Grymonprez B."/>
            <person name="Chuang Y.-J."/>
            <person name="Vandenbussche F."/>
            <person name="Braeken M."/>
            <person name="Weltjens I."/>
            <person name="Voet M."/>
            <person name="Bastiaens I."/>
            <person name="Aert R."/>
            <person name="Defoor E."/>
            <person name="Weitzenegger T."/>
            <person name="Bothe G."/>
            <person name="Ramsperger U."/>
            <person name="Hilbert H."/>
            <person name="Braun M."/>
            <person name="Holzer E."/>
            <person name="Brandt A."/>
            <person name="Peters S."/>
            <person name="van Staveren M."/>
            <person name="Dirkse W."/>
            <person name="Mooijman P."/>
            <person name="Klein Lankhorst R."/>
            <person name="Rose M."/>
            <person name="Hauf J."/>
            <person name="Koetter P."/>
            <person name="Berneiser S."/>
            <person name="Hempel S."/>
            <person name="Feldpausch M."/>
            <person name="Lamberth S."/>
            <person name="Van den Daele H."/>
            <person name="De Keyser A."/>
            <person name="Buysshaert C."/>
            <person name="Gielen J."/>
            <person name="Villarroel R."/>
            <person name="De Clercq R."/>
            <person name="van Montagu M."/>
            <person name="Rogers J."/>
            <person name="Cronin A."/>
            <person name="Quail M.A."/>
            <person name="Bray-Allen S."/>
            <person name="Clark L."/>
            <person name="Doggett J."/>
            <person name="Hall S."/>
            <person name="Kay M."/>
            <person name="Lennard N."/>
            <person name="McLay K."/>
            <person name="Mayes R."/>
            <person name="Pettett A."/>
            <person name="Rajandream M.A."/>
            <person name="Lyne M."/>
            <person name="Benes V."/>
            <person name="Rechmann S."/>
            <person name="Borkova D."/>
            <person name="Bloecker H."/>
            <person name="Scharfe M."/>
            <person name="Grimm M."/>
            <person name="Loehnert T.-H."/>
            <person name="Dose S."/>
            <person name="de Haan M."/>
            <person name="Maarse A.C."/>
            <person name="Schaefer M."/>
            <person name="Mueller-Auer S."/>
            <person name="Gabel C."/>
            <person name="Fuchs M."/>
            <person name="Fartmann B."/>
            <person name="Granderath K."/>
            <person name="Dauner D."/>
            <person name="Herzl A."/>
            <person name="Neumann S."/>
            <person name="Argiriou A."/>
            <person name="Vitale D."/>
            <person name="Liguori R."/>
            <person name="Piravandi E."/>
            <person name="Massenet O."/>
            <person name="Quigley F."/>
            <person name="Clabauld G."/>
            <person name="Muendlein A."/>
            <person name="Felber R."/>
            <person name="Schnabl S."/>
            <person name="Hiller R."/>
            <person name="Schmidt W."/>
            <person name="Lecharny A."/>
            <person name="Aubourg S."/>
            <person name="Chefdor F."/>
            <person name="Cooke R."/>
            <person name="Berger C."/>
            <person name="Monfort A."/>
            <person name="Casacuberta E."/>
            <person name="Gibbons T."/>
            <person name="Weber N."/>
            <person name="Vandenbol M."/>
            <person name="Bargues M."/>
            <person name="Terol J."/>
            <person name="Torres A."/>
            <person name="Perez-Perez A."/>
            <person name="Purnelle B."/>
            <person name="Bent E."/>
            <person name="Johnson S."/>
            <person name="Tacon D."/>
            <person name="Jesse T."/>
            <person name="Heijnen L."/>
            <person name="Schwarz S."/>
            <person name="Scholler P."/>
            <person name="Heber S."/>
            <person name="Francs P."/>
            <person name="Bielke C."/>
            <person name="Frishman D."/>
            <person name="Haase D."/>
            <person name="Lemcke K."/>
            <person name="Mewes H.-W."/>
            <person name="Stocker S."/>
            <person name="Zaccaria P."/>
            <person name="Bevan M."/>
            <person name="Wilson R.K."/>
            <person name="de la Bastide M."/>
            <person name="Habermann K."/>
            <person name="Parnell L."/>
            <person name="Dedhia N."/>
            <person name="Gnoj L."/>
            <person name="Schutz K."/>
            <person name="Huang E."/>
            <person name="Spiegel L."/>
            <person name="Sekhon M."/>
            <person name="Murray J."/>
            <person name="Sheet P."/>
            <person name="Cordes M."/>
            <person name="Abu-Threideh J."/>
            <person name="Stoneking T."/>
            <person name="Kalicki J."/>
            <person name="Graves T."/>
            <person name="Harmon G."/>
            <person name="Edwards J."/>
            <person name="Latreille P."/>
            <person name="Courtney L."/>
            <person name="Cloud J."/>
            <person name="Abbott A."/>
            <person name="Scott K."/>
            <person name="Johnson D."/>
            <person name="Minx P."/>
            <person name="Bentley D."/>
            <person name="Fulton B."/>
            <person name="Miller N."/>
            <person name="Greco T."/>
            <person name="Kemp K."/>
            <person name="Kramer J."/>
            <person name="Fulton L."/>
            <person name="Mardis E."/>
            <person name="Dante M."/>
            <person name="Pepin K."/>
            <person name="Hillier L.W."/>
            <person name="Nelson J."/>
            <person name="Spieth J."/>
            <person name="Ryan E."/>
            <person name="Andrews S."/>
            <person name="Geisel C."/>
            <person name="Layman D."/>
            <person name="Du H."/>
            <person name="Ali J."/>
            <person name="Berghoff A."/>
            <person name="Jones K."/>
            <person name="Drone K."/>
            <person name="Cotton M."/>
            <person name="Joshu C."/>
            <person name="Antonoiu B."/>
            <person name="Zidanic M."/>
            <person name="Strong C."/>
            <person name="Sun H."/>
            <person name="Lamar B."/>
            <person name="Yordan C."/>
            <person name="Ma P."/>
            <person name="Zhong J."/>
            <person name="Preston R."/>
            <person name="Vil D."/>
            <person name="Shekher M."/>
            <person name="Matero A."/>
            <person name="Shah R."/>
            <person name="Swaby I.K."/>
            <person name="O'Shaughnessy A."/>
            <person name="Rodriguez M."/>
            <person name="Hoffman J."/>
            <person name="Till S."/>
            <person name="Granat S."/>
            <person name="Shohdy N."/>
            <person name="Hasegawa A."/>
            <person name="Hameed A."/>
            <person name="Lodhi M."/>
            <person name="Johnson A."/>
            <person name="Chen E."/>
            <person name="Marra M.A."/>
            <person name="Martienssen R."/>
            <person name="McCombie W.R."/>
        </authorList>
    </citation>
    <scope>NUCLEOTIDE SEQUENCE [LARGE SCALE GENOMIC DNA]</scope>
    <source>
        <strain>cv. Columbia</strain>
    </source>
</reference>
<reference key="3">
    <citation type="journal article" date="2017" name="Plant J.">
        <title>Araport11: a complete reannotation of the Arabidopsis thaliana reference genome.</title>
        <authorList>
            <person name="Cheng C.Y."/>
            <person name="Krishnakumar V."/>
            <person name="Chan A.P."/>
            <person name="Thibaud-Nissen F."/>
            <person name="Schobel S."/>
            <person name="Town C.D."/>
        </authorList>
    </citation>
    <scope>GENOME REANNOTATION</scope>
    <source>
        <strain>cv. Columbia</strain>
    </source>
</reference>
<reference key="4">
    <citation type="journal article" date="2003" name="Science">
        <title>Empirical analysis of transcriptional activity in the Arabidopsis genome.</title>
        <authorList>
            <person name="Yamada K."/>
            <person name="Lim J."/>
            <person name="Dale J.M."/>
            <person name="Chen H."/>
            <person name="Shinn P."/>
            <person name="Palm C.J."/>
            <person name="Southwick A.M."/>
            <person name="Wu H.C."/>
            <person name="Kim C.J."/>
            <person name="Nguyen M."/>
            <person name="Pham P.K."/>
            <person name="Cheuk R.F."/>
            <person name="Karlin-Newmann G."/>
            <person name="Liu S.X."/>
            <person name="Lam B."/>
            <person name="Sakano H."/>
            <person name="Wu T."/>
            <person name="Yu G."/>
            <person name="Miranda M."/>
            <person name="Quach H.L."/>
            <person name="Tripp M."/>
            <person name="Chang C.H."/>
            <person name="Lee J.M."/>
            <person name="Toriumi M.J."/>
            <person name="Chan M.M."/>
            <person name="Tang C.C."/>
            <person name="Onodera C.S."/>
            <person name="Deng J.M."/>
            <person name="Akiyama K."/>
            <person name="Ansari Y."/>
            <person name="Arakawa T."/>
            <person name="Banh J."/>
            <person name="Banno F."/>
            <person name="Bowser L."/>
            <person name="Brooks S.Y."/>
            <person name="Carninci P."/>
            <person name="Chao Q."/>
            <person name="Choy N."/>
            <person name="Enju A."/>
            <person name="Goldsmith A.D."/>
            <person name="Gurjal M."/>
            <person name="Hansen N.F."/>
            <person name="Hayashizaki Y."/>
            <person name="Johnson-Hopson C."/>
            <person name="Hsuan V.W."/>
            <person name="Iida K."/>
            <person name="Karnes M."/>
            <person name="Khan S."/>
            <person name="Koesema E."/>
            <person name="Ishida J."/>
            <person name="Jiang P.X."/>
            <person name="Jones T."/>
            <person name="Kawai J."/>
            <person name="Kamiya A."/>
            <person name="Meyers C."/>
            <person name="Nakajima M."/>
            <person name="Narusaka M."/>
            <person name="Seki M."/>
            <person name="Sakurai T."/>
            <person name="Satou M."/>
            <person name="Tamse R."/>
            <person name="Vaysberg M."/>
            <person name="Wallender E.K."/>
            <person name="Wong C."/>
            <person name="Yamamura Y."/>
            <person name="Yuan S."/>
            <person name="Shinozaki K."/>
            <person name="Davis R.W."/>
            <person name="Theologis A."/>
            <person name="Ecker J.R."/>
        </authorList>
    </citation>
    <scope>NUCLEOTIDE SEQUENCE [LARGE SCALE MRNA]</scope>
    <source>
        <strain>cv. Columbia</strain>
    </source>
</reference>
<reference key="5">
    <citation type="submission" date="2004-10" db="EMBL/GenBank/DDBJ databases">
        <title>Arabidopsis ORF clones.</title>
        <authorList>
            <person name="Shinn P."/>
            <person name="Chen H."/>
            <person name="Cheuk R.F."/>
            <person name="Kim C.J."/>
            <person name="Ecker J.R."/>
        </authorList>
    </citation>
    <scope>NUCLEOTIDE SEQUENCE [LARGE SCALE MRNA]</scope>
    <source>
        <strain>cv. Columbia</strain>
    </source>
</reference>
<reference key="6">
    <citation type="journal article" date="2011" name="Plant J.">
        <title>KMS1 and KMS2, two plant endoplasmic reticulum proteins involved in the early secretory pathway.</title>
        <authorList>
            <person name="Wang P."/>
            <person name="Hummel E."/>
            <person name="Osterrieder A."/>
            <person name="Meyer A.J."/>
            <person name="Frigerio L."/>
            <person name="Sparkes I."/>
            <person name="Hawes C."/>
        </authorList>
    </citation>
    <scope>FUNCTION</scope>
    <scope>SUBCELLULAR LOCATION</scope>
    <scope>TOPOLOGY</scope>
</reference>
<reference key="7">
    <citation type="journal article" date="2012" name="Mol. Cell. Proteomics">
        <title>Comparative large-scale characterisation of plant vs. mammal proteins reveals similar and idiosyncratic N-alpha acetylation features.</title>
        <authorList>
            <person name="Bienvenut W.V."/>
            <person name="Sumpton D."/>
            <person name="Martinez A."/>
            <person name="Lilla S."/>
            <person name="Espagne C."/>
            <person name="Meinnel T."/>
            <person name="Giglione C."/>
        </authorList>
    </citation>
    <scope>ACETYLATION [LARGE SCALE ANALYSIS] AT GLY-2</scope>
    <scope>CLEAVAGE OF INITIATOR METHIONINE [LARGE SCALE ANALYSIS]</scope>
    <scope>IDENTIFICATION BY MASS SPECTROMETRY [LARGE SCALE ANALYSIS]</scope>
</reference>
<name>KMS1_ARATH</name>
<feature type="initiator methionine" description="Removed" evidence="7">
    <location>
        <position position="1"/>
    </location>
</feature>
<feature type="chain" id="PRO_0000430958" description="Vacuole membrane protein KMS1">
    <location>
        <begin position="2"/>
        <end position="416"/>
    </location>
</feature>
<feature type="topological domain" description="Cytoplasmic" evidence="2">
    <location>
        <begin position="2"/>
        <end position="60"/>
    </location>
</feature>
<feature type="transmembrane region" description="Helical; Name=1" evidence="1">
    <location>
        <begin position="61"/>
        <end position="81"/>
    </location>
</feature>
<feature type="topological domain" description="Lumenal" evidence="3">
    <location>
        <begin position="82"/>
        <end position="101"/>
    </location>
</feature>
<feature type="transmembrane region" description="Helical; Name=2" evidence="1">
    <location>
        <begin position="102"/>
        <end position="124"/>
    </location>
</feature>
<feature type="topological domain" description="Cytoplasmic" evidence="3">
    <location>
        <begin position="125"/>
        <end position="257"/>
    </location>
</feature>
<feature type="transmembrane region" description="Helical; Name=3" evidence="1">
    <location>
        <begin position="258"/>
        <end position="278"/>
    </location>
</feature>
<feature type="topological domain" description="Lumenal" evidence="3">
    <location>
        <begin position="279"/>
        <end position="289"/>
    </location>
</feature>
<feature type="transmembrane region" description="Helical; Name=4" evidence="1">
    <location>
        <begin position="290"/>
        <end position="312"/>
    </location>
</feature>
<feature type="topological domain" description="Cytoplasmic" evidence="3">
    <location>
        <begin position="313"/>
        <end position="323"/>
    </location>
</feature>
<feature type="transmembrane region" description="Helical; Name=5" evidence="1">
    <location>
        <begin position="324"/>
        <end position="344"/>
    </location>
</feature>
<feature type="topological domain" description="Lumenal" evidence="3">
    <location>
        <begin position="345"/>
        <end position="372"/>
    </location>
</feature>
<feature type="transmembrane region" description="Helical; Name=6" evidence="1">
    <location>
        <begin position="373"/>
        <end position="393"/>
    </location>
</feature>
<feature type="topological domain" description="Cytoplasmic" evidence="2">
    <location>
        <begin position="394"/>
        <end position="416"/>
    </location>
</feature>
<feature type="modified residue" description="N-acetylglycine" evidence="7">
    <location>
        <position position="2"/>
    </location>
</feature>
<feature type="sequence conflict" description="In Ref. 4; AAL24087." ref="4">
    <original>E</original>
    <variation>G</variation>
    <location>
        <position position="94"/>
    </location>
</feature>
<feature type="sequence conflict" description="In Ref. 4; AAL24087." ref="4">
    <original>I</original>
    <variation>M</variation>
    <location>
        <position position="380"/>
    </location>
</feature>
<organism>
    <name type="scientific">Arabidopsis thaliana</name>
    <name type="common">Mouse-ear cress</name>
    <dbReference type="NCBI Taxonomy" id="3702"/>
    <lineage>
        <taxon>Eukaryota</taxon>
        <taxon>Viridiplantae</taxon>
        <taxon>Streptophyta</taxon>
        <taxon>Embryophyta</taxon>
        <taxon>Tracheophyta</taxon>
        <taxon>Spermatophyta</taxon>
        <taxon>Magnoliopsida</taxon>
        <taxon>eudicotyledons</taxon>
        <taxon>Gunneridae</taxon>
        <taxon>Pentapetalae</taxon>
        <taxon>rosids</taxon>
        <taxon>malvids</taxon>
        <taxon>Brassicales</taxon>
        <taxon>Brassicaceae</taxon>
        <taxon>Camelineae</taxon>
        <taxon>Arabidopsis</taxon>
    </lineage>
</organism>
<accession>Q5XF36</accession>
<accession>O23350</accession>
<accession>Q93YX1</accession>
<gene>
    <name evidence="3" type="primary">KMS1</name>
    <name evidence="5" type="ordered locus">At4g14950</name>
    <name evidence="6" type="ORF">dl3515w</name>
</gene>
<protein>
    <recommendedName>
        <fullName evidence="3">Vacuole membrane protein KMS1</fullName>
    </recommendedName>
    <alternativeName>
        <fullName evidence="3">Protein KILLING ME SLOWLY 1</fullName>
    </alternativeName>
</protein>
<keyword id="KW-0007">Acetylation</keyword>
<keyword id="KW-0025">Alternative splicing</keyword>
<keyword id="KW-0256">Endoplasmic reticulum</keyword>
<keyword id="KW-0931">ER-Golgi transport</keyword>
<keyword id="KW-0472">Membrane</keyword>
<keyword id="KW-1185">Reference proteome</keyword>
<keyword id="KW-0812">Transmembrane</keyword>
<keyword id="KW-1133">Transmembrane helix</keyword>
<keyword id="KW-0813">Transport</keyword>
<sequence length="416" mass="45848">MGSAGVASSSSDVAISALREKHEKEVENLTLTTQPLNTLKLFVEATIQYIKRSISYLLAHGGWFILITTLLVVSGGLLVTVDGPHGKHVEEVLEYVRYGLWWIALGVASSIGLGSGLHTFVLYLGPHIALFTLKATLCGRVDLKSAPYDTIQLKRVPSWLDKSCSEFGPPLMISAAGSRVPLTSILPQVQLEAILWGIGTALGELPPYFISRAASISGSTVDGMEELDGSSTEDSGFMATHLNRVKRWLLTHSQHLNFFTVLVLASVPNPLFDLAGIMCGQFGIPFWEFFLATLIGKAIIKTHIQTIFIICVCNNQLLDWMENELIWILSHVPGLASMLPGLTAKLHAMKEKYIDAPSPVPSHIKVKKWDFSFASIWNGIVWLMLLNFFVKIVTATAQRHLKKKQEKEMATLTHSD</sequence>
<dbReference type="EMBL" id="Z97337">
    <property type="protein sequence ID" value="CAB46053.1"/>
    <property type="status" value="ALT_SEQ"/>
    <property type="molecule type" value="Genomic_DNA"/>
</dbReference>
<dbReference type="EMBL" id="AL161540">
    <property type="protein sequence ID" value="CAB78537.1"/>
    <property type="status" value="ALT_SEQ"/>
    <property type="molecule type" value="Genomic_DNA"/>
</dbReference>
<dbReference type="EMBL" id="CP002687">
    <property type="protein sequence ID" value="AEE83528.1"/>
    <property type="molecule type" value="Genomic_DNA"/>
</dbReference>
<dbReference type="EMBL" id="AY059730">
    <property type="protein sequence ID" value="AAL24087.1"/>
    <property type="molecule type" value="mRNA"/>
</dbReference>
<dbReference type="EMBL" id="BT015780">
    <property type="protein sequence ID" value="AAU90070.1"/>
    <property type="molecule type" value="mRNA"/>
</dbReference>
<dbReference type="PIR" id="C85164">
    <property type="entry name" value="C85164"/>
</dbReference>
<dbReference type="PIR" id="H71412">
    <property type="entry name" value="H71412"/>
</dbReference>
<dbReference type="RefSeq" id="NP_567450.1">
    <molecule id="Q5XF36-1"/>
    <property type="nucleotide sequence ID" value="NM_117581.5"/>
</dbReference>
<dbReference type="BioGRID" id="12450">
    <property type="interactions" value="6"/>
</dbReference>
<dbReference type="FunCoup" id="Q5XF36">
    <property type="interactions" value="2579"/>
</dbReference>
<dbReference type="IntAct" id="Q5XF36">
    <property type="interactions" value="6"/>
</dbReference>
<dbReference type="STRING" id="3702.Q5XF36"/>
<dbReference type="iPTMnet" id="Q5XF36"/>
<dbReference type="PaxDb" id="3702-AT4G14950.1"/>
<dbReference type="ProteomicsDB" id="230383">
    <molecule id="Q5XF36-1"/>
</dbReference>
<dbReference type="EnsemblPlants" id="AT4G14950.1">
    <molecule id="Q5XF36-1"/>
    <property type="protein sequence ID" value="AT4G14950.1"/>
    <property type="gene ID" value="AT4G14950"/>
</dbReference>
<dbReference type="GeneID" id="827153"/>
<dbReference type="Gramene" id="AT4G14950.1">
    <molecule id="Q5XF36-1"/>
    <property type="protein sequence ID" value="AT4G14950.1"/>
    <property type="gene ID" value="AT4G14950"/>
</dbReference>
<dbReference type="KEGG" id="ath:AT4G14950"/>
<dbReference type="Araport" id="AT4G14950"/>
<dbReference type="TAIR" id="AT4G14950">
    <property type="gene designation" value="KMS1"/>
</dbReference>
<dbReference type="eggNOG" id="KOG1109">
    <property type="taxonomic scope" value="Eukaryota"/>
</dbReference>
<dbReference type="InParanoid" id="Q5XF36"/>
<dbReference type="OMA" id="EEPYDKR"/>
<dbReference type="PhylomeDB" id="Q5XF36"/>
<dbReference type="PRO" id="PR:Q5XF36"/>
<dbReference type="Proteomes" id="UP000006548">
    <property type="component" value="Chromosome 4"/>
</dbReference>
<dbReference type="ExpressionAtlas" id="Q5XF36">
    <property type="expression patterns" value="baseline and differential"/>
</dbReference>
<dbReference type="GO" id="GO:0005783">
    <property type="term" value="C:endoplasmic reticulum"/>
    <property type="evidence" value="ECO:0000314"/>
    <property type="project" value="TAIR"/>
</dbReference>
<dbReference type="GO" id="GO:0005789">
    <property type="term" value="C:endoplasmic reticulum membrane"/>
    <property type="evidence" value="ECO:0000314"/>
    <property type="project" value="UniProtKB"/>
</dbReference>
<dbReference type="GO" id="GO:0010256">
    <property type="term" value="P:endomembrane system organization"/>
    <property type="evidence" value="ECO:0000315"/>
    <property type="project" value="UniProtKB"/>
</dbReference>
<dbReference type="GO" id="GO:0016192">
    <property type="term" value="P:vesicle-mediated transport"/>
    <property type="evidence" value="ECO:0000315"/>
    <property type="project" value="UniProtKB"/>
</dbReference>
<proteinExistence type="evidence at protein level"/>
<comment type="function">
    <text evidence="2">Involved in the early secretory pathway. Required for the correct export of secretory products from the endoplasmic reticulum (ER) and involved in the maintenance of ER integrity.</text>
</comment>
<comment type="subcellular location">
    <subcellularLocation>
        <location evidence="2">Endoplasmic reticulum membrane</location>
        <topology evidence="3">Multi-pass membrane protein</topology>
    </subcellularLocation>
</comment>
<comment type="alternative products">
    <event type="alternative splicing"/>
    <isoform>
        <id>Q5XF36-1</id>
        <name>1</name>
        <sequence type="displayed"/>
    </isoform>
</comment>
<comment type="similarity">
    <text evidence="4">Belongs to the VMP1 family.</text>
</comment>
<comment type="sequence caution" evidence="4">
    <conflict type="erroneous gene model prediction">
        <sequence resource="EMBL-CDS" id="CAB46053"/>
    </conflict>
    <text>The predicted gene At4g14950 has been split into 2 genes: At4g14950 and At4g14965.</text>
</comment>
<comment type="sequence caution" evidence="4">
    <conflict type="erroneous gene model prediction">
        <sequence resource="EMBL-CDS" id="CAB78537"/>
    </conflict>
    <text>The predicted gene At4g14950 has been split into 2 genes: At4g14950 and At4g14965.</text>
</comment>
<evidence type="ECO:0000255" key="1"/>
<evidence type="ECO:0000269" key="2">
    <source>
    </source>
</evidence>
<evidence type="ECO:0000303" key="3">
    <source>
    </source>
</evidence>
<evidence type="ECO:0000305" key="4"/>
<evidence type="ECO:0000312" key="5">
    <source>
        <dbReference type="Araport" id="AT4G14950"/>
    </source>
</evidence>
<evidence type="ECO:0000312" key="6">
    <source>
        <dbReference type="EMBL" id="CAB46053.1"/>
    </source>
</evidence>
<evidence type="ECO:0007744" key="7">
    <source>
    </source>
</evidence>